<keyword id="KW-1185">Reference proteome</keyword>
<feature type="chain" id="PRO_0000210386" description="Uncharacterized protein MG011 homolog">
    <location>
        <begin position="1"/>
        <end position="285"/>
    </location>
</feature>
<feature type="domain" description="ATP-grasp" evidence="1">
    <location>
        <begin position="107"/>
        <end position="285"/>
    </location>
</feature>
<name>Y015_MYCPN</name>
<gene>
    <name type="ordered locus">MPN_015</name>
    <name type="ORF">D12_orf285</name>
    <name type="ORF">MP139</name>
</gene>
<accession>P75098</accession>
<protein>
    <recommendedName>
        <fullName>Uncharacterized protein MG011 homolog</fullName>
    </recommendedName>
</protein>
<proteinExistence type="predicted"/>
<organism>
    <name type="scientific">Mycoplasma pneumoniae (strain ATCC 29342 / M129 / Subtype 1)</name>
    <name type="common">Mycoplasmoides pneumoniae</name>
    <dbReference type="NCBI Taxonomy" id="272634"/>
    <lineage>
        <taxon>Bacteria</taxon>
        <taxon>Bacillati</taxon>
        <taxon>Mycoplasmatota</taxon>
        <taxon>Mycoplasmoidales</taxon>
        <taxon>Mycoplasmoidaceae</taxon>
        <taxon>Mycoplasmoides</taxon>
    </lineage>
</organism>
<dbReference type="EMBL" id="U00089">
    <property type="protein sequence ID" value="AAB95787.1"/>
    <property type="molecule type" value="Genomic_DNA"/>
</dbReference>
<dbReference type="PIR" id="S73465">
    <property type="entry name" value="S73465"/>
</dbReference>
<dbReference type="RefSeq" id="NP_109703.1">
    <property type="nucleotide sequence ID" value="NC_000912.1"/>
</dbReference>
<dbReference type="RefSeq" id="WP_010874372.1">
    <property type="nucleotide sequence ID" value="NZ_OU342337.1"/>
</dbReference>
<dbReference type="SMR" id="P75098"/>
<dbReference type="STRING" id="272634.MPN_015"/>
<dbReference type="EnsemblBacteria" id="AAB95787">
    <property type="protein sequence ID" value="AAB95787"/>
    <property type="gene ID" value="MPN_015"/>
</dbReference>
<dbReference type="KEGG" id="mpn:MPN_015"/>
<dbReference type="PATRIC" id="fig|272634.6.peg.14"/>
<dbReference type="HOGENOM" id="CLU_054353_0_2_14"/>
<dbReference type="OrthoDB" id="4426445at2"/>
<dbReference type="BioCyc" id="MPNE272634:G1GJ3-21-MONOMER"/>
<dbReference type="Proteomes" id="UP000000808">
    <property type="component" value="Chromosome"/>
</dbReference>
<dbReference type="GO" id="GO:0005737">
    <property type="term" value="C:cytoplasm"/>
    <property type="evidence" value="ECO:0007669"/>
    <property type="project" value="TreeGrafter"/>
</dbReference>
<dbReference type="GO" id="GO:0005524">
    <property type="term" value="F:ATP binding"/>
    <property type="evidence" value="ECO:0007669"/>
    <property type="project" value="InterPro"/>
</dbReference>
<dbReference type="GO" id="GO:0046872">
    <property type="term" value="F:metal ion binding"/>
    <property type="evidence" value="ECO:0007669"/>
    <property type="project" value="InterPro"/>
</dbReference>
<dbReference type="GO" id="GO:0018169">
    <property type="term" value="F:ribosomal S6-glutamic acid ligase activity"/>
    <property type="evidence" value="ECO:0007669"/>
    <property type="project" value="TreeGrafter"/>
</dbReference>
<dbReference type="GO" id="GO:0009432">
    <property type="term" value="P:SOS response"/>
    <property type="evidence" value="ECO:0007669"/>
    <property type="project" value="TreeGrafter"/>
</dbReference>
<dbReference type="Gene3D" id="3.30.1490.20">
    <property type="entry name" value="ATP-grasp fold, A domain"/>
    <property type="match status" value="1"/>
</dbReference>
<dbReference type="Gene3D" id="3.30.470.20">
    <property type="entry name" value="ATP-grasp fold, B domain"/>
    <property type="match status" value="1"/>
</dbReference>
<dbReference type="InterPro" id="IPR011761">
    <property type="entry name" value="ATP-grasp"/>
</dbReference>
<dbReference type="InterPro" id="IPR013651">
    <property type="entry name" value="ATP-grasp_RimK-type"/>
</dbReference>
<dbReference type="InterPro" id="IPR013815">
    <property type="entry name" value="ATP_grasp_subdomain_1"/>
</dbReference>
<dbReference type="PANTHER" id="PTHR21621:SF0">
    <property type="entry name" value="BETA-CITRYLGLUTAMATE SYNTHASE B-RELATED"/>
    <property type="match status" value="1"/>
</dbReference>
<dbReference type="PANTHER" id="PTHR21621">
    <property type="entry name" value="RIBOSOMAL PROTEIN S6 MODIFICATION PROTEIN"/>
    <property type="match status" value="1"/>
</dbReference>
<dbReference type="Pfam" id="PF08443">
    <property type="entry name" value="RimK"/>
    <property type="match status" value="1"/>
</dbReference>
<dbReference type="SUPFAM" id="SSF56059">
    <property type="entry name" value="Glutathione synthetase ATP-binding domain-like"/>
    <property type="match status" value="1"/>
</dbReference>
<dbReference type="PROSITE" id="PS50975">
    <property type="entry name" value="ATP_GRASP"/>
    <property type="match status" value="1"/>
</dbReference>
<reference key="1">
    <citation type="journal article" date="1996" name="Nucleic Acids Res.">
        <title>Complete sequence analysis of the genome of the bacterium Mycoplasma pneumoniae.</title>
        <authorList>
            <person name="Himmelreich R."/>
            <person name="Hilbert H."/>
            <person name="Plagens H."/>
            <person name="Pirkl E."/>
            <person name="Li B.-C."/>
            <person name="Herrmann R."/>
        </authorList>
    </citation>
    <scope>NUCLEOTIDE SEQUENCE [LARGE SCALE GENOMIC DNA]</scope>
    <source>
        <strain>ATCC 29342 / M129 / Subtype 1</strain>
    </source>
</reference>
<evidence type="ECO:0000255" key="1">
    <source>
        <dbReference type="PROSITE-ProRule" id="PRU00409"/>
    </source>
</evidence>
<sequence length="285" mass="33446">MAKIKLKNRKALVVYNKTDFDKNKHFAQALVDELNKKKLVGHILLLDDETADHKHIKNVELIINRSRRIDFLTKHNFLNSFLINPQNIVLVANDKYETYRWLKQHKFLTVDTTIFDPKKIKTFPIVIKKRDSYGGEDVHLIQNAEEIKQLPIQNPNEWIVQPFLSIGKVEYRAYILFGKVLKTIRRTASGDDFRANYSQNAAVDLFKLKWYIKHKIKRIAKKLGHGYYAIDFFLNKYNRIVVNEIEDAAGARALTKMCPDLNLPRVIIKSSLTHFKHHLKRQMIP</sequence>